<comment type="function">
    <text evidence="1">Component of the biogenesis of lysosome-related organelles complex-1 (BLOC-1), a complex involved in endosomal cargo sorting.</text>
</comment>
<comment type="subunit">
    <text evidence="1">Component of the biogenesis of lysosome-related organelles complex-1 (BLOC-1).</text>
</comment>
<comment type="subcellular location">
    <subcellularLocation>
        <location evidence="1">Endosome</location>
    </subcellularLocation>
</comment>
<comment type="similarity">
    <text evidence="3">Belongs to the SNAPIN family.</text>
</comment>
<evidence type="ECO:0000250" key="1"/>
<evidence type="ECO:0000255" key="2"/>
<evidence type="ECO:0000305" key="3"/>
<keyword id="KW-0175">Coiled coil</keyword>
<keyword id="KW-0967">Endosome</keyword>
<keyword id="KW-1185">Reference proteome</keyword>
<keyword id="KW-0813">Transport</keyword>
<accession>Q755V6</accession>
<proteinExistence type="inferred from homology"/>
<organism>
    <name type="scientific">Eremothecium gossypii (strain ATCC 10895 / CBS 109.51 / FGSC 9923 / NRRL Y-1056)</name>
    <name type="common">Yeast</name>
    <name type="synonym">Ashbya gossypii</name>
    <dbReference type="NCBI Taxonomy" id="284811"/>
    <lineage>
        <taxon>Eukaryota</taxon>
        <taxon>Fungi</taxon>
        <taxon>Dikarya</taxon>
        <taxon>Ascomycota</taxon>
        <taxon>Saccharomycotina</taxon>
        <taxon>Saccharomycetes</taxon>
        <taxon>Saccharomycetales</taxon>
        <taxon>Saccharomycetaceae</taxon>
        <taxon>Eremothecium</taxon>
    </lineage>
</organism>
<sequence>MNPSEVASAGIHPIELCVHSILSSNLEGIYQAITELRESQALLVMKFNQVKKSFMDEQELLQEEGSLKEELARVNQLKKRLDKLTELYAELARKCGAL</sequence>
<gene>
    <name type="primary">SNN1</name>
    <name type="ordered locus">AER412W</name>
</gene>
<protein>
    <recommendedName>
        <fullName>Biogenesis of lysosome-related organelles complex 1 subunit SNN1</fullName>
        <shortName>BLOC-1 subunit SNN1</shortName>
    </recommendedName>
    <alternativeName>
        <fullName>SNAPIN-like protein 1</fullName>
    </alternativeName>
</protein>
<feature type="chain" id="PRO_0000410656" description="Biogenesis of lysosome-related organelles complex 1 subunit SNN1">
    <location>
        <begin position="1"/>
        <end position="98"/>
    </location>
</feature>
<feature type="coiled-coil region" evidence="2">
    <location>
        <begin position="55"/>
        <end position="98"/>
    </location>
</feature>
<dbReference type="EMBL" id="AE016818">
    <property type="protein sequence ID" value="AAS53091.1"/>
    <property type="molecule type" value="Genomic_DNA"/>
</dbReference>
<dbReference type="RefSeq" id="NP_985267.1">
    <property type="nucleotide sequence ID" value="NM_210621.1"/>
</dbReference>
<dbReference type="SMR" id="Q755V6"/>
<dbReference type="FunCoup" id="Q755V6">
    <property type="interactions" value="34"/>
</dbReference>
<dbReference type="STRING" id="284811.Q755V6"/>
<dbReference type="EnsemblFungi" id="AAS53091">
    <property type="protein sequence ID" value="AAS53091"/>
    <property type="gene ID" value="AGOS_AER412W"/>
</dbReference>
<dbReference type="GeneID" id="4621485"/>
<dbReference type="KEGG" id="ago:AGOS_AER412W"/>
<dbReference type="eggNOG" id="ENOG502S7PY">
    <property type="taxonomic scope" value="Eukaryota"/>
</dbReference>
<dbReference type="HOGENOM" id="CLU_178727_0_0_1"/>
<dbReference type="InParanoid" id="Q755V6"/>
<dbReference type="OMA" id="IHPIELC"/>
<dbReference type="OrthoDB" id="4065244at2759"/>
<dbReference type="Proteomes" id="UP000000591">
    <property type="component" value="Chromosome V"/>
</dbReference>
<dbReference type="GO" id="GO:0031083">
    <property type="term" value="C:BLOC-1 complex"/>
    <property type="evidence" value="ECO:0007669"/>
    <property type="project" value="EnsemblFungi"/>
</dbReference>
<dbReference type="GO" id="GO:0005768">
    <property type="term" value="C:endosome"/>
    <property type="evidence" value="ECO:0007669"/>
    <property type="project" value="UniProtKB-SubCell"/>
</dbReference>
<dbReference type="GO" id="GO:0007032">
    <property type="term" value="P:endosome organization"/>
    <property type="evidence" value="ECO:0007669"/>
    <property type="project" value="EnsemblFungi"/>
</dbReference>
<dbReference type="GO" id="GO:0032880">
    <property type="term" value="P:regulation of protein localization"/>
    <property type="evidence" value="ECO:0007669"/>
    <property type="project" value="EnsemblFungi"/>
</dbReference>
<name>SNAPN_EREGS</name>
<reference key="1">
    <citation type="journal article" date="2004" name="Science">
        <title>The Ashbya gossypii genome as a tool for mapping the ancient Saccharomyces cerevisiae genome.</title>
        <authorList>
            <person name="Dietrich F.S."/>
            <person name="Voegeli S."/>
            <person name="Brachat S."/>
            <person name="Lerch A."/>
            <person name="Gates K."/>
            <person name="Steiner S."/>
            <person name="Mohr C."/>
            <person name="Poehlmann R."/>
            <person name="Luedi P."/>
            <person name="Choi S."/>
            <person name="Wing R.A."/>
            <person name="Flavier A."/>
            <person name="Gaffney T.D."/>
            <person name="Philippsen P."/>
        </authorList>
    </citation>
    <scope>NUCLEOTIDE SEQUENCE [LARGE SCALE GENOMIC DNA]</scope>
    <source>
        <strain>ATCC 10895 / CBS 109.51 / FGSC 9923 / NRRL Y-1056</strain>
    </source>
</reference>
<reference key="2">
    <citation type="journal article" date="2013" name="G3 (Bethesda)">
        <title>Genomes of Ashbya fungi isolated from insects reveal four mating-type loci, numerous translocations, lack of transposons, and distinct gene duplications.</title>
        <authorList>
            <person name="Dietrich F.S."/>
            <person name="Voegeli S."/>
            <person name="Kuo S."/>
            <person name="Philippsen P."/>
        </authorList>
    </citation>
    <scope>GENOME REANNOTATION</scope>
    <source>
        <strain>ATCC 10895 / CBS 109.51 / FGSC 9923 / NRRL Y-1056</strain>
    </source>
</reference>